<evidence type="ECO:0000255" key="1">
    <source>
        <dbReference type="HAMAP-Rule" id="MF_00289"/>
    </source>
</evidence>
<accession>Q8ZVM1</accession>
<dbReference type="EMBL" id="AE009441">
    <property type="protein sequence ID" value="AAL64035.1"/>
    <property type="molecule type" value="Genomic_DNA"/>
</dbReference>
<dbReference type="RefSeq" id="WP_011008503.1">
    <property type="nucleotide sequence ID" value="NC_003364.1"/>
</dbReference>
<dbReference type="SMR" id="Q8ZVM1"/>
<dbReference type="FunCoup" id="Q8ZVM1">
    <property type="interactions" value="171"/>
</dbReference>
<dbReference type="STRING" id="178306.PAE2215"/>
<dbReference type="MEROPS" id="T01.970"/>
<dbReference type="EnsemblBacteria" id="AAL64035">
    <property type="protein sequence ID" value="AAL64035"/>
    <property type="gene ID" value="PAE2215"/>
</dbReference>
<dbReference type="GeneID" id="1464369"/>
<dbReference type="KEGG" id="pai:PAE2215"/>
<dbReference type="PATRIC" id="fig|178306.9.peg.1647"/>
<dbReference type="eggNOG" id="arCOG00971">
    <property type="taxonomic scope" value="Archaea"/>
</dbReference>
<dbReference type="HOGENOM" id="CLU_035750_4_1_2"/>
<dbReference type="InParanoid" id="Q8ZVM1"/>
<dbReference type="Proteomes" id="UP000002439">
    <property type="component" value="Chromosome"/>
</dbReference>
<dbReference type="GO" id="GO:0005737">
    <property type="term" value="C:cytoplasm"/>
    <property type="evidence" value="ECO:0007669"/>
    <property type="project" value="UniProtKB-SubCell"/>
</dbReference>
<dbReference type="GO" id="GO:0019773">
    <property type="term" value="C:proteasome core complex, alpha-subunit complex"/>
    <property type="evidence" value="ECO:0000250"/>
    <property type="project" value="UniProtKB"/>
</dbReference>
<dbReference type="GO" id="GO:0004298">
    <property type="term" value="F:threonine-type endopeptidase activity"/>
    <property type="evidence" value="ECO:0007669"/>
    <property type="project" value="InterPro"/>
</dbReference>
<dbReference type="GO" id="GO:0043161">
    <property type="term" value="P:proteasome-mediated ubiquitin-dependent protein catabolic process"/>
    <property type="evidence" value="ECO:0000318"/>
    <property type="project" value="GO_Central"/>
</dbReference>
<dbReference type="CDD" id="cd03756">
    <property type="entry name" value="proteasome_alpha_archeal"/>
    <property type="match status" value="1"/>
</dbReference>
<dbReference type="FunFam" id="3.60.20.10:FF:000004">
    <property type="entry name" value="Proteasome subunit alpha type-4"/>
    <property type="match status" value="1"/>
</dbReference>
<dbReference type="Gene3D" id="3.60.20.10">
    <property type="entry name" value="Glutamine Phosphoribosylpyrophosphate, subunit 1, domain 1"/>
    <property type="match status" value="1"/>
</dbReference>
<dbReference type="HAMAP" id="MF_00289_A">
    <property type="entry name" value="Proteasome_A_A"/>
    <property type="match status" value="1"/>
</dbReference>
<dbReference type="InterPro" id="IPR029055">
    <property type="entry name" value="Ntn_hydrolases_N"/>
</dbReference>
<dbReference type="InterPro" id="IPR050115">
    <property type="entry name" value="Proteasome_alpha"/>
</dbReference>
<dbReference type="InterPro" id="IPR023332">
    <property type="entry name" value="Proteasome_alpha-type"/>
</dbReference>
<dbReference type="InterPro" id="IPR019982">
    <property type="entry name" value="Proteasome_asu_arc"/>
</dbReference>
<dbReference type="InterPro" id="IPR000426">
    <property type="entry name" value="Proteasome_asu_N"/>
</dbReference>
<dbReference type="InterPro" id="IPR001353">
    <property type="entry name" value="Proteasome_sua/b"/>
</dbReference>
<dbReference type="NCBIfam" id="TIGR03633">
    <property type="entry name" value="arc_protsome_A"/>
    <property type="match status" value="1"/>
</dbReference>
<dbReference type="NCBIfam" id="NF003075">
    <property type="entry name" value="PRK03996.1"/>
    <property type="match status" value="1"/>
</dbReference>
<dbReference type="PANTHER" id="PTHR11599">
    <property type="entry name" value="PROTEASOME SUBUNIT ALPHA/BETA"/>
    <property type="match status" value="1"/>
</dbReference>
<dbReference type="Pfam" id="PF00227">
    <property type="entry name" value="Proteasome"/>
    <property type="match status" value="1"/>
</dbReference>
<dbReference type="Pfam" id="PF10584">
    <property type="entry name" value="Proteasome_A_N"/>
    <property type="match status" value="1"/>
</dbReference>
<dbReference type="SMART" id="SM00948">
    <property type="entry name" value="Proteasome_A_N"/>
    <property type="match status" value="1"/>
</dbReference>
<dbReference type="SUPFAM" id="SSF56235">
    <property type="entry name" value="N-terminal nucleophile aminohydrolases (Ntn hydrolases)"/>
    <property type="match status" value="1"/>
</dbReference>
<dbReference type="PROSITE" id="PS00388">
    <property type="entry name" value="PROTEASOME_ALPHA_1"/>
    <property type="match status" value="1"/>
</dbReference>
<dbReference type="PROSITE" id="PS51475">
    <property type="entry name" value="PROTEASOME_ALPHA_2"/>
    <property type="match status" value="1"/>
</dbReference>
<name>PSA_PYRAE</name>
<keyword id="KW-0963">Cytoplasm</keyword>
<keyword id="KW-0647">Proteasome</keyword>
<keyword id="KW-1185">Reference proteome</keyword>
<comment type="function">
    <text evidence="1">Component of the proteasome core, a large protease complex with broad specificity involved in protein degradation.</text>
</comment>
<comment type="activity regulation">
    <text evidence="1">The formation of the proteasomal ATPase PAN-20S proteasome complex, via the docking of the C-termini of PAN into the intersubunit pockets in the alpha-rings, triggers opening of the gate for substrate entry. Interconversion between the open-gate and close-gate conformations leads to a dynamic regulation of the 20S proteasome proteolysis activity.</text>
</comment>
<comment type="subunit">
    <text evidence="1">The 20S proteasome core is composed of 14 alpha and 14 beta subunits that assemble into four stacked heptameric rings, resulting in a barrel-shaped structure. The two inner rings, each composed of seven catalytic beta subunits, are sandwiched by two outer rings, each composed of seven alpha subunits. The catalytic chamber with the active sites is on the inside of the barrel. Has a gated structure, the ends of the cylinder being occluded by the N-termini of the alpha-subunits. Is capped at one or both ends by the proteasome regulatory ATPase, PAN.</text>
</comment>
<comment type="subcellular location">
    <subcellularLocation>
        <location evidence="1">Cytoplasm</location>
    </subcellularLocation>
</comment>
<comment type="similarity">
    <text evidence="1">Belongs to the peptidase T1A family.</text>
</comment>
<reference key="1">
    <citation type="journal article" date="2002" name="Proc. Natl. Acad. Sci. U.S.A.">
        <title>Genome sequence of the hyperthermophilic crenarchaeon Pyrobaculum aerophilum.</title>
        <authorList>
            <person name="Fitz-Gibbon S.T."/>
            <person name="Ladner H."/>
            <person name="Kim U.-J."/>
            <person name="Stetter K.O."/>
            <person name="Simon M.I."/>
            <person name="Miller J.H."/>
        </authorList>
    </citation>
    <scope>NUCLEOTIDE SEQUENCE [LARGE SCALE GENOMIC DNA]</scope>
    <source>
        <strain>ATCC 51768 / DSM 7523 / JCM 9630 / CIP 104966 / NBRC 100827 / IM2</strain>
    </source>
</reference>
<organism>
    <name type="scientific">Pyrobaculum aerophilum (strain ATCC 51768 / DSM 7523 / JCM 9630 / CIP 104966 / NBRC 100827 / IM2)</name>
    <dbReference type="NCBI Taxonomy" id="178306"/>
    <lineage>
        <taxon>Archaea</taxon>
        <taxon>Thermoproteota</taxon>
        <taxon>Thermoprotei</taxon>
        <taxon>Thermoproteales</taxon>
        <taxon>Thermoproteaceae</taxon>
        <taxon>Pyrobaculum</taxon>
    </lineage>
</organism>
<protein>
    <recommendedName>
        <fullName evidence="1">Proteasome subunit alpha</fullName>
    </recommendedName>
    <alternativeName>
        <fullName evidence="1">20S proteasome alpha subunit</fullName>
    </alternativeName>
    <alternativeName>
        <fullName evidence="1">Proteasome core protein PsmA</fullName>
    </alternativeName>
</protein>
<sequence>MFPPAMAGYDRAITIFSPEGKIYQVEYAGEAVKRGWPTVGVKCKAGVVLTAEKRKISALFDSSSLEKIYLIDEHVAASPSGLLADARILIDYARDVALSHRFIYDEPIDVEFLTKAVCNLKQQYTQFGGARPFGVALLIAGVDRHGARLYQTDPSGVYIGYFATAIGAESGTITEFLEKNYKFDMEMGECIELALKALASAVEITDSANVEVAYATIEEKKMRKMSQDEVASLLTKLGLLKKS</sequence>
<feature type="chain" id="PRO_0000124182" description="Proteasome subunit alpha">
    <location>
        <begin position="1"/>
        <end position="243"/>
    </location>
</feature>
<proteinExistence type="inferred from homology"/>
<gene>
    <name evidence="1" type="primary">psmA</name>
    <name type="ordered locus">PAE2215</name>
</gene>